<organism>
    <name type="scientific">Yersinia pseudotuberculosis</name>
    <dbReference type="NCBI Taxonomy" id="633"/>
    <lineage>
        <taxon>Bacteria</taxon>
        <taxon>Pseudomonadati</taxon>
        <taxon>Pseudomonadota</taxon>
        <taxon>Gammaproteobacteria</taxon>
        <taxon>Enterobacterales</taxon>
        <taxon>Yersiniaceae</taxon>
        <taxon>Yersinia</taxon>
    </lineage>
</organism>
<proteinExistence type="predicted"/>
<gene>
    <name type="primary">rfbX</name>
</gene>
<feature type="chain" id="PRO_0000097297" description="Putative O-antigen export protein">
    <location>
        <begin position="1"/>
        <end position="437"/>
    </location>
</feature>
<feature type="transmembrane region" description="Helical" evidence="1">
    <location>
        <begin position="3"/>
        <end position="23"/>
    </location>
</feature>
<feature type="transmembrane region" description="Helical" evidence="1">
    <location>
        <begin position="41"/>
        <end position="61"/>
    </location>
</feature>
<feature type="transmembrane region" description="Helical" evidence="1">
    <location>
        <begin position="81"/>
        <end position="101"/>
    </location>
</feature>
<feature type="transmembrane region" description="Helical" evidence="1">
    <location>
        <begin position="129"/>
        <end position="149"/>
    </location>
</feature>
<feature type="transmembrane region" description="Helical" evidence="1">
    <location>
        <begin position="152"/>
        <end position="172"/>
    </location>
</feature>
<feature type="transmembrane region" description="Helical" evidence="1">
    <location>
        <begin position="185"/>
        <end position="205"/>
    </location>
</feature>
<feature type="transmembrane region" description="Helical" evidence="1">
    <location>
        <begin position="231"/>
        <end position="251"/>
    </location>
</feature>
<feature type="transmembrane region" description="Helical" evidence="1">
    <location>
        <begin position="269"/>
        <end position="289"/>
    </location>
</feature>
<feature type="transmembrane region" description="Helical" evidence="1">
    <location>
        <begin position="310"/>
        <end position="330"/>
    </location>
</feature>
<feature type="transmembrane region" description="Helical" evidence="1">
    <location>
        <begin position="332"/>
        <end position="352"/>
    </location>
</feature>
<feature type="transmembrane region" description="Helical" evidence="1">
    <location>
        <begin position="375"/>
        <end position="395"/>
    </location>
</feature>
<feature type="transmembrane region" description="Helical" evidence="1">
    <location>
        <begin position="398"/>
        <end position="418"/>
    </location>
</feature>
<comment type="function">
    <text>May be involved in the translocation process of the nascent O-polysaccharide molecules and/or its ligation to lipid A core units.</text>
</comment>
<comment type="pathway">
    <text>Bacterial outer membrane biogenesis; LPS O-antigen biosynthesis.</text>
</comment>
<comment type="subcellular location">
    <subcellularLocation>
        <location evidence="2">Cell inner membrane</location>
        <topology evidence="2">Multi-pass membrane protein</topology>
    </subcellularLocation>
</comment>
<evidence type="ECO:0000255" key="1"/>
<evidence type="ECO:0000305" key="2"/>
<reference key="1">
    <citation type="journal article" date="1993" name="J. Bacteriol.">
        <title>Molecular analysis of the 3,6-dideoxyhexose pathway genes of Yersinia pseudotuberculosis serogroup IIA.</title>
        <authorList>
            <person name="Kessler A.C."/>
            <person name="Haase A."/>
            <person name="Reeves P.R."/>
        </authorList>
    </citation>
    <scope>NUCLEOTIDE SEQUENCE [GENOMIC DNA]</scope>
</reference>
<reference key="2">
    <citation type="journal article" date="1994" name="Mol. Microbiol.">
        <title>The JUMPstart sequence: a 39 bp element common to several polysaccharide gene clusters.</title>
        <authorList>
            <person name="Hobbs M."/>
            <person name="Reeves P.R."/>
        </authorList>
    </citation>
    <scope>NUCLEOTIDE SEQUENCE [GENOMIC DNA]</scope>
</reference>
<name>RFBX_YERPU</name>
<sequence>MRVPTHIIVAASAWGSRLVSIFIQFYSIKILLDLLGTEGYAVFTVIGSLVGWFLLADFGLGNSLQNQISYRRANHQEYQDLVLSAVIAIIPIFILFIILILTLSPYISEFLLGGFDFLNNNQRSNIFKVASFIFLTTSIGNLAYKIWFSEHKGWVSNIIPALSSIVGLVFLMRLPSDGSNISEDIIFSIYCFYIPAAFFGVISTLFKVIPYLKCKNFLNKLTLYTLIKNGGGFFLFSVLSALVLQVDYIVMSQTLVERDLVTYNIMSKTFGLINFIYAALLQSLWPVCAEASSKLRFDNFYKIEKKYISFGFIIVIASSFVIFLLKDFIVNILAPGKDFYFPISLIILFSFYQVVRVWTDTYAMFLMSIGKLKPLWISVPFQAVLSGSLQWVGAVNYGLVGLLCGLIASFLITVSWWLPFSFRSTVDRIVKDKRLDE</sequence>
<protein>
    <recommendedName>
        <fullName>Putative O-antigen export protein</fullName>
    </recommendedName>
</protein>
<dbReference type="EMBL" id="AF461770">
    <property type="protein sequence ID" value="AAB49403.1"/>
    <property type="molecule type" value="Genomic_DNA"/>
</dbReference>
<dbReference type="PIR" id="H47070">
    <property type="entry name" value="H47070"/>
</dbReference>
<dbReference type="SMR" id="Q05347"/>
<dbReference type="eggNOG" id="COG2244">
    <property type="taxonomic scope" value="Bacteria"/>
</dbReference>
<dbReference type="UniPathway" id="UPA00281"/>
<dbReference type="GO" id="GO:0005886">
    <property type="term" value="C:plasma membrane"/>
    <property type="evidence" value="ECO:0007669"/>
    <property type="project" value="UniProtKB-SubCell"/>
</dbReference>
<dbReference type="GO" id="GO:0009243">
    <property type="term" value="P:O antigen biosynthetic process"/>
    <property type="evidence" value="ECO:0007669"/>
    <property type="project" value="UniProtKB-UniPathway"/>
</dbReference>
<dbReference type="CDD" id="cd12082">
    <property type="entry name" value="MATE_like"/>
    <property type="match status" value="1"/>
</dbReference>
<dbReference type="InterPro" id="IPR050833">
    <property type="entry name" value="Poly_Biosynth_Transport"/>
</dbReference>
<dbReference type="PANTHER" id="PTHR30250:SF11">
    <property type="entry name" value="O-ANTIGEN TRANSPORTER-RELATED"/>
    <property type="match status" value="1"/>
</dbReference>
<dbReference type="PANTHER" id="PTHR30250">
    <property type="entry name" value="PST FAMILY PREDICTED COLANIC ACID TRANSPORTER"/>
    <property type="match status" value="1"/>
</dbReference>
<accession>Q05347</accession>
<keyword id="KW-0997">Cell inner membrane</keyword>
<keyword id="KW-1003">Cell membrane</keyword>
<keyword id="KW-0448">Lipopolysaccharide biosynthesis</keyword>
<keyword id="KW-0472">Membrane</keyword>
<keyword id="KW-0812">Transmembrane</keyword>
<keyword id="KW-1133">Transmembrane helix</keyword>
<keyword id="KW-0813">Transport</keyword>